<reference key="1">
    <citation type="submission" date="2008-05" db="EMBL/GenBank/DDBJ databases">
        <title>Complete sequence of chromosome of Geobacter lovleyi SZ.</title>
        <authorList>
            <consortium name="US DOE Joint Genome Institute"/>
            <person name="Lucas S."/>
            <person name="Copeland A."/>
            <person name="Lapidus A."/>
            <person name="Glavina del Rio T."/>
            <person name="Dalin E."/>
            <person name="Tice H."/>
            <person name="Bruce D."/>
            <person name="Goodwin L."/>
            <person name="Pitluck S."/>
            <person name="Chertkov O."/>
            <person name="Meincke L."/>
            <person name="Brettin T."/>
            <person name="Detter J.C."/>
            <person name="Han C."/>
            <person name="Tapia R."/>
            <person name="Kuske C.R."/>
            <person name="Schmutz J."/>
            <person name="Larimer F."/>
            <person name="Land M."/>
            <person name="Hauser L."/>
            <person name="Kyrpides N."/>
            <person name="Mikhailova N."/>
            <person name="Sung Y."/>
            <person name="Fletcher K.E."/>
            <person name="Ritalahti K.M."/>
            <person name="Loeffler F.E."/>
            <person name="Richardson P."/>
        </authorList>
    </citation>
    <scope>NUCLEOTIDE SEQUENCE [LARGE SCALE GENOMIC DNA]</scope>
    <source>
        <strain>ATCC BAA-1151 / DSM 17278 / SZ</strain>
    </source>
</reference>
<sequence length="162" mass="17093">MSRINANDLNLTDRVVHISRVAKVVKGGRRFSFSALVVVGDASGHVGYGLGKANEVPEAIRKGVEQAKKNLIKVPVNQNQSIPYEIIGRFGAGRILMKPASPGTGVIAGGAARAIFEAAGISNILSKCLGSNNPHNVVKAAFEGLRLLKTPEELTARRGLAE</sequence>
<feature type="chain" id="PRO_1000140858" description="Small ribosomal subunit protein uS5">
    <location>
        <begin position="1"/>
        <end position="162"/>
    </location>
</feature>
<feature type="domain" description="S5 DRBM" evidence="1">
    <location>
        <begin position="11"/>
        <end position="74"/>
    </location>
</feature>
<evidence type="ECO:0000255" key="1">
    <source>
        <dbReference type="HAMAP-Rule" id="MF_01307"/>
    </source>
</evidence>
<evidence type="ECO:0000305" key="2"/>
<proteinExistence type="inferred from homology"/>
<protein>
    <recommendedName>
        <fullName evidence="1">Small ribosomal subunit protein uS5</fullName>
    </recommendedName>
    <alternativeName>
        <fullName evidence="2">30S ribosomal protein S5</fullName>
    </alternativeName>
</protein>
<name>RS5_TRIL1</name>
<accession>B3E847</accession>
<gene>
    <name evidence="1" type="primary">rpsE</name>
    <name type="ordered locus">Glov_1363</name>
</gene>
<dbReference type="EMBL" id="CP001089">
    <property type="protein sequence ID" value="ACD95084.1"/>
    <property type="molecule type" value="Genomic_DNA"/>
</dbReference>
<dbReference type="RefSeq" id="WP_012469429.1">
    <property type="nucleotide sequence ID" value="NC_010814.1"/>
</dbReference>
<dbReference type="SMR" id="B3E847"/>
<dbReference type="STRING" id="398767.Glov_1363"/>
<dbReference type="KEGG" id="glo:Glov_1363"/>
<dbReference type="eggNOG" id="COG0098">
    <property type="taxonomic scope" value="Bacteria"/>
</dbReference>
<dbReference type="HOGENOM" id="CLU_065898_2_2_7"/>
<dbReference type="OrthoDB" id="9809045at2"/>
<dbReference type="Proteomes" id="UP000002420">
    <property type="component" value="Chromosome"/>
</dbReference>
<dbReference type="GO" id="GO:0015935">
    <property type="term" value="C:small ribosomal subunit"/>
    <property type="evidence" value="ECO:0007669"/>
    <property type="project" value="InterPro"/>
</dbReference>
<dbReference type="GO" id="GO:0019843">
    <property type="term" value="F:rRNA binding"/>
    <property type="evidence" value="ECO:0007669"/>
    <property type="project" value="UniProtKB-UniRule"/>
</dbReference>
<dbReference type="GO" id="GO:0003735">
    <property type="term" value="F:structural constituent of ribosome"/>
    <property type="evidence" value="ECO:0007669"/>
    <property type="project" value="InterPro"/>
</dbReference>
<dbReference type="GO" id="GO:0006412">
    <property type="term" value="P:translation"/>
    <property type="evidence" value="ECO:0007669"/>
    <property type="project" value="UniProtKB-UniRule"/>
</dbReference>
<dbReference type="FunFam" id="3.30.160.20:FF:000001">
    <property type="entry name" value="30S ribosomal protein S5"/>
    <property type="match status" value="1"/>
</dbReference>
<dbReference type="FunFam" id="3.30.230.10:FF:000002">
    <property type="entry name" value="30S ribosomal protein S5"/>
    <property type="match status" value="1"/>
</dbReference>
<dbReference type="Gene3D" id="3.30.160.20">
    <property type="match status" value="1"/>
</dbReference>
<dbReference type="Gene3D" id="3.30.230.10">
    <property type="match status" value="1"/>
</dbReference>
<dbReference type="HAMAP" id="MF_01307_B">
    <property type="entry name" value="Ribosomal_uS5_B"/>
    <property type="match status" value="1"/>
</dbReference>
<dbReference type="InterPro" id="IPR020568">
    <property type="entry name" value="Ribosomal_Su5_D2-typ_SF"/>
</dbReference>
<dbReference type="InterPro" id="IPR000851">
    <property type="entry name" value="Ribosomal_uS5"/>
</dbReference>
<dbReference type="InterPro" id="IPR005712">
    <property type="entry name" value="Ribosomal_uS5_bac-type"/>
</dbReference>
<dbReference type="InterPro" id="IPR005324">
    <property type="entry name" value="Ribosomal_uS5_C"/>
</dbReference>
<dbReference type="InterPro" id="IPR013810">
    <property type="entry name" value="Ribosomal_uS5_N"/>
</dbReference>
<dbReference type="InterPro" id="IPR018192">
    <property type="entry name" value="Ribosomal_uS5_N_CS"/>
</dbReference>
<dbReference type="InterPro" id="IPR014721">
    <property type="entry name" value="Ribsml_uS5_D2-typ_fold_subgr"/>
</dbReference>
<dbReference type="NCBIfam" id="TIGR01021">
    <property type="entry name" value="rpsE_bact"/>
    <property type="match status" value="1"/>
</dbReference>
<dbReference type="PANTHER" id="PTHR48277">
    <property type="entry name" value="MITOCHONDRIAL RIBOSOMAL PROTEIN S5"/>
    <property type="match status" value="1"/>
</dbReference>
<dbReference type="PANTHER" id="PTHR48277:SF1">
    <property type="entry name" value="MITOCHONDRIAL RIBOSOMAL PROTEIN S5"/>
    <property type="match status" value="1"/>
</dbReference>
<dbReference type="Pfam" id="PF00333">
    <property type="entry name" value="Ribosomal_S5"/>
    <property type="match status" value="1"/>
</dbReference>
<dbReference type="Pfam" id="PF03719">
    <property type="entry name" value="Ribosomal_S5_C"/>
    <property type="match status" value="1"/>
</dbReference>
<dbReference type="SUPFAM" id="SSF54768">
    <property type="entry name" value="dsRNA-binding domain-like"/>
    <property type="match status" value="1"/>
</dbReference>
<dbReference type="SUPFAM" id="SSF54211">
    <property type="entry name" value="Ribosomal protein S5 domain 2-like"/>
    <property type="match status" value="1"/>
</dbReference>
<dbReference type="PROSITE" id="PS00585">
    <property type="entry name" value="RIBOSOMAL_S5"/>
    <property type="match status" value="1"/>
</dbReference>
<dbReference type="PROSITE" id="PS50881">
    <property type="entry name" value="S5_DSRBD"/>
    <property type="match status" value="1"/>
</dbReference>
<keyword id="KW-1185">Reference proteome</keyword>
<keyword id="KW-0687">Ribonucleoprotein</keyword>
<keyword id="KW-0689">Ribosomal protein</keyword>
<keyword id="KW-0694">RNA-binding</keyword>
<keyword id="KW-0699">rRNA-binding</keyword>
<organism>
    <name type="scientific">Trichlorobacter lovleyi (strain ATCC BAA-1151 / DSM 17278 / SZ)</name>
    <name type="common">Geobacter lovleyi</name>
    <dbReference type="NCBI Taxonomy" id="398767"/>
    <lineage>
        <taxon>Bacteria</taxon>
        <taxon>Pseudomonadati</taxon>
        <taxon>Thermodesulfobacteriota</taxon>
        <taxon>Desulfuromonadia</taxon>
        <taxon>Geobacterales</taxon>
        <taxon>Geobacteraceae</taxon>
        <taxon>Trichlorobacter</taxon>
    </lineage>
</organism>
<comment type="function">
    <text evidence="1">With S4 and S12 plays an important role in translational accuracy.</text>
</comment>
<comment type="function">
    <text evidence="1">Located at the back of the 30S subunit body where it stabilizes the conformation of the head with respect to the body.</text>
</comment>
<comment type="subunit">
    <text evidence="1">Part of the 30S ribosomal subunit. Contacts proteins S4 and S8.</text>
</comment>
<comment type="domain">
    <text>The N-terminal domain interacts with the head of the 30S subunit; the C-terminal domain interacts with the body and contacts protein S4. The interaction surface between S4 and S5 is involved in control of translational fidelity.</text>
</comment>
<comment type="similarity">
    <text evidence="1">Belongs to the universal ribosomal protein uS5 family.</text>
</comment>